<sequence length="234" mass="25901">ASKTCPSNTPLSCHNTTVVQDTCCFIPSGQLLQTQFWDTDPSTGPSDSWTIHGLWPDNCDGSFPQTCDASRAYTNITDILTAMGADDTLQYMQTYWKDYQGNDESFWEHEWGKHGTCITTLDPGCYDDYVPTEEAADFFSKTVSLFKTLPTYQWLADAGITPDGSKSYALDDIQSALSQQHGAEVTLGCDGKTLNEVWYHFNVKGSLQDGQFVAAEPDGAKSTCPDDVYYDPKK</sequence>
<proteinExistence type="evidence at protein level"/>
<protein>
    <recommendedName>
        <fullName>Ribonuclease Trv</fullName>
        <shortName>RNase Trv</shortName>
        <ecNumber>4.6.1.19</ecNumber>
    </recommendedName>
</protein>
<evidence type="ECO:0000250" key="1"/>
<evidence type="ECO:0000255" key="2">
    <source>
        <dbReference type="PROSITE-ProRule" id="PRU10045"/>
    </source>
</evidence>
<evidence type="ECO:0000255" key="3">
    <source>
        <dbReference type="PROSITE-ProRule" id="PRU10046"/>
    </source>
</evidence>
<evidence type="ECO:0000269" key="4">
    <source>
    </source>
</evidence>
<evidence type="ECO:0000305" key="5"/>
<dbReference type="EC" id="4.6.1.19"/>
<dbReference type="PIR" id="JX0197">
    <property type="entry name" value="JX0197"/>
</dbReference>
<dbReference type="SMR" id="P24657"/>
<dbReference type="iPTMnet" id="P24657"/>
<dbReference type="GO" id="GO:0005576">
    <property type="term" value="C:extracellular region"/>
    <property type="evidence" value="ECO:0007669"/>
    <property type="project" value="TreeGrafter"/>
</dbReference>
<dbReference type="GO" id="GO:0033897">
    <property type="term" value="F:ribonuclease T2 activity"/>
    <property type="evidence" value="ECO:0007669"/>
    <property type="project" value="UniProtKB-EC"/>
</dbReference>
<dbReference type="GO" id="GO:0003723">
    <property type="term" value="F:RNA binding"/>
    <property type="evidence" value="ECO:0007669"/>
    <property type="project" value="InterPro"/>
</dbReference>
<dbReference type="GO" id="GO:0006401">
    <property type="term" value="P:RNA catabolic process"/>
    <property type="evidence" value="ECO:0007669"/>
    <property type="project" value="TreeGrafter"/>
</dbReference>
<dbReference type="CDD" id="cd01061">
    <property type="entry name" value="RNase_T2_euk"/>
    <property type="match status" value="1"/>
</dbReference>
<dbReference type="FunFam" id="3.90.730.10:FF:000004">
    <property type="entry name" value="Ribonuclease T2-like"/>
    <property type="match status" value="1"/>
</dbReference>
<dbReference type="Gene3D" id="3.90.730.10">
    <property type="entry name" value="Ribonuclease T2-like"/>
    <property type="match status" value="1"/>
</dbReference>
<dbReference type="InterPro" id="IPR033697">
    <property type="entry name" value="Ribonuclease_T2_eukaryotic"/>
</dbReference>
<dbReference type="InterPro" id="IPR001568">
    <property type="entry name" value="RNase_T2-like"/>
</dbReference>
<dbReference type="InterPro" id="IPR036430">
    <property type="entry name" value="RNase_T2-like_sf"/>
</dbReference>
<dbReference type="InterPro" id="IPR018188">
    <property type="entry name" value="RNase_T2_His_AS_1"/>
</dbReference>
<dbReference type="InterPro" id="IPR033130">
    <property type="entry name" value="RNase_T2_His_AS_2"/>
</dbReference>
<dbReference type="PANTHER" id="PTHR11240">
    <property type="entry name" value="RIBONUCLEASE T2"/>
    <property type="match status" value="1"/>
</dbReference>
<dbReference type="PANTHER" id="PTHR11240:SF22">
    <property type="entry name" value="RIBONUCLEASE T2"/>
    <property type="match status" value="1"/>
</dbReference>
<dbReference type="Pfam" id="PF00445">
    <property type="entry name" value="Ribonuclease_T2"/>
    <property type="match status" value="1"/>
</dbReference>
<dbReference type="SUPFAM" id="SSF55895">
    <property type="entry name" value="Ribonuclease Rh-like"/>
    <property type="match status" value="1"/>
</dbReference>
<dbReference type="PROSITE" id="PS00530">
    <property type="entry name" value="RNASE_T2_1"/>
    <property type="match status" value="1"/>
</dbReference>
<dbReference type="PROSITE" id="PS00531">
    <property type="entry name" value="RNASE_T2_2"/>
    <property type="match status" value="1"/>
</dbReference>
<comment type="function">
    <text>This is a base non-specific and adenylic acid preferential ribonuclease.</text>
</comment>
<comment type="catalytic activity">
    <reaction evidence="2 3">
        <text>a ribonucleotidyl-ribonucleotide-RNA + H2O = a 3'-end 3'-phospho-ribonucleotide-RNA + a 5'-end dephospho-ribonucleoside-RNA + H(+)</text>
        <dbReference type="Rhea" id="RHEA:68052"/>
        <dbReference type="Rhea" id="RHEA-COMP:10463"/>
        <dbReference type="Rhea" id="RHEA-COMP:13936"/>
        <dbReference type="Rhea" id="RHEA-COMP:17355"/>
        <dbReference type="ChEBI" id="CHEBI:15377"/>
        <dbReference type="ChEBI" id="CHEBI:15378"/>
        <dbReference type="ChEBI" id="CHEBI:83062"/>
        <dbReference type="ChEBI" id="CHEBI:138284"/>
        <dbReference type="ChEBI" id="CHEBI:173118"/>
        <dbReference type="EC" id="4.6.1.19"/>
    </reaction>
</comment>
<comment type="similarity">
    <text evidence="5">Belongs to the RNase T2 family.</text>
</comment>
<reference key="1">
    <citation type="journal article" date="1991" name="J. Biochem.">
        <title>Isolation, characterization, and primary structure of a base non-specific and adenylic acid preferential ribonuclease with higher specific activity from Trichoderma viride.</title>
        <authorList>
            <person name="Inada Y."/>
            <person name="Watanabe H."/>
            <person name="Ohgi K."/>
            <person name="Irie M."/>
        </authorList>
    </citation>
    <scope>PROTEIN SEQUENCE</scope>
</reference>
<keyword id="KW-0903">Direct protein sequencing</keyword>
<keyword id="KW-1015">Disulfide bond</keyword>
<keyword id="KW-0255">Endonuclease</keyword>
<keyword id="KW-0325">Glycoprotein</keyword>
<keyword id="KW-0378">Hydrolase</keyword>
<keyword id="KW-0456">Lyase</keyword>
<keyword id="KW-0540">Nuclease</keyword>
<accession>P24657</accession>
<organism>
    <name type="scientific">Hypocrea rufa</name>
    <name type="common">Trichoderma viride</name>
    <dbReference type="NCBI Taxonomy" id="5547"/>
    <lineage>
        <taxon>Eukaryota</taxon>
        <taxon>Fungi</taxon>
        <taxon>Dikarya</taxon>
        <taxon>Ascomycota</taxon>
        <taxon>Pezizomycotina</taxon>
        <taxon>Sordariomycetes</taxon>
        <taxon>Hypocreomycetidae</taxon>
        <taxon>Hypocreales</taxon>
        <taxon>Hypocreaceae</taxon>
        <taxon>Trichoderma</taxon>
    </lineage>
</organism>
<name>RNTR_HYPRU</name>
<feature type="chain" id="PRO_0000206507" description="Ribonuclease Trv">
    <location>
        <begin position="1"/>
        <end position="234"/>
    </location>
</feature>
<feature type="active site" evidence="1">
    <location>
        <position position="52"/>
    </location>
</feature>
<feature type="active site" evidence="1">
    <location>
        <position position="110"/>
    </location>
</feature>
<feature type="active site" evidence="1">
    <location>
        <position position="114"/>
    </location>
</feature>
<feature type="glycosylation site" description="N-linked (GlcNAc...) asparagine" evidence="4">
    <location>
        <position position="15"/>
    </location>
</feature>
<feature type="glycosylation site" description="N-linked (GlcNAc...) asparagine">
    <location>
        <position position="75"/>
    </location>
</feature>
<feature type="disulfide bond" evidence="1">
    <location>
        <begin position="5"/>
        <end position="24"/>
    </location>
</feature>
<feature type="disulfide bond" evidence="1">
    <location>
        <begin position="13"/>
        <end position="59"/>
    </location>
</feature>
<feature type="disulfide bond" evidence="1">
    <location>
        <begin position="23"/>
        <end position="125"/>
    </location>
</feature>
<feature type="disulfide bond" evidence="1">
    <location>
        <begin position="67"/>
        <end position="117"/>
    </location>
</feature>
<feature type="disulfide bond" evidence="1">
    <location>
        <begin position="189"/>
        <end position="224"/>
    </location>
</feature>